<dbReference type="EC" id="4.1.2.53" evidence="1"/>
<dbReference type="EMBL" id="U00096">
    <property type="protein sequence ID" value="AAC75305.1"/>
    <property type="molecule type" value="Genomic_DNA"/>
</dbReference>
<dbReference type="EMBL" id="AP009048">
    <property type="protein sequence ID" value="BAA16064.2"/>
    <property type="molecule type" value="Genomic_DNA"/>
</dbReference>
<dbReference type="PIR" id="C64995">
    <property type="entry name" value="C64995"/>
</dbReference>
<dbReference type="RefSeq" id="NP_416748.1">
    <property type="nucleotide sequence ID" value="NC_000913.3"/>
</dbReference>
<dbReference type="RefSeq" id="WP_000992954.1">
    <property type="nucleotide sequence ID" value="NZ_LN832404.1"/>
</dbReference>
<dbReference type="PDB" id="2VWS">
    <property type="method" value="X-ray"/>
    <property type="resolution" value="1.39 A"/>
    <property type="chains" value="A/B/C=1-267"/>
</dbReference>
<dbReference type="PDB" id="2VWT">
    <property type="method" value="X-ray"/>
    <property type="resolution" value="1.93 A"/>
    <property type="chains" value="A/B/C=1-267"/>
</dbReference>
<dbReference type="PDBsum" id="2VWS"/>
<dbReference type="PDBsum" id="2VWT"/>
<dbReference type="SMR" id="P76469"/>
<dbReference type="BioGRID" id="4261484">
    <property type="interactions" value="18"/>
</dbReference>
<dbReference type="DIP" id="DIP-11953N"/>
<dbReference type="FunCoup" id="P76469">
    <property type="interactions" value="497"/>
</dbReference>
<dbReference type="STRING" id="511145.b2245"/>
<dbReference type="PaxDb" id="511145-b2245"/>
<dbReference type="EnsemblBacteria" id="AAC75305">
    <property type="protein sequence ID" value="AAC75305"/>
    <property type="gene ID" value="b2245"/>
</dbReference>
<dbReference type="GeneID" id="948054"/>
<dbReference type="KEGG" id="ecj:JW2239"/>
<dbReference type="KEGG" id="eco:b2245"/>
<dbReference type="KEGG" id="ecoc:C3026_12545"/>
<dbReference type="PATRIC" id="fig|511145.12.peg.2336"/>
<dbReference type="EchoBASE" id="EB3836"/>
<dbReference type="eggNOG" id="COG3836">
    <property type="taxonomic scope" value="Bacteria"/>
</dbReference>
<dbReference type="HOGENOM" id="CLU_059964_1_0_6"/>
<dbReference type="InParanoid" id="P76469"/>
<dbReference type="OMA" id="HYLALGC"/>
<dbReference type="OrthoDB" id="86160at2"/>
<dbReference type="PhylomeDB" id="P76469"/>
<dbReference type="BioCyc" id="EcoCyc:G7158-MONOMER"/>
<dbReference type="BioCyc" id="MetaCyc:G7158-MONOMER"/>
<dbReference type="BRENDA" id="4.1.2.53">
    <property type="organism ID" value="2026"/>
</dbReference>
<dbReference type="EvolutionaryTrace" id="P76469"/>
<dbReference type="PRO" id="PR:P76469"/>
<dbReference type="Proteomes" id="UP000000625">
    <property type="component" value="Chromosome"/>
</dbReference>
<dbReference type="GO" id="GO:0005737">
    <property type="term" value="C:cytoplasm"/>
    <property type="evidence" value="ECO:0000314"/>
    <property type="project" value="EcoliWiki"/>
</dbReference>
<dbReference type="GO" id="GO:0061677">
    <property type="term" value="F:2-dehydro-3-deoxy-D-gluconate aldolase activity"/>
    <property type="evidence" value="ECO:0007669"/>
    <property type="project" value="RHEA"/>
</dbReference>
<dbReference type="GO" id="GO:0106099">
    <property type="term" value="F:2-keto-3-deoxy-L-rhamnonate aldolase activity"/>
    <property type="evidence" value="ECO:0000314"/>
    <property type="project" value="EcoCyc"/>
</dbReference>
<dbReference type="GO" id="GO:0016832">
    <property type="term" value="F:aldehyde-lyase activity"/>
    <property type="evidence" value="ECO:0000314"/>
    <property type="project" value="EcoliWiki"/>
</dbReference>
<dbReference type="GO" id="GO:0042802">
    <property type="term" value="F:identical protein binding"/>
    <property type="evidence" value="ECO:0000314"/>
    <property type="project" value="EcoCyc"/>
</dbReference>
<dbReference type="GO" id="GO:0000287">
    <property type="term" value="F:magnesium ion binding"/>
    <property type="evidence" value="ECO:0007669"/>
    <property type="project" value="UniProtKB-UniRule"/>
</dbReference>
<dbReference type="GO" id="GO:0016151">
    <property type="term" value="F:nickel cation binding"/>
    <property type="evidence" value="ECO:0000314"/>
    <property type="project" value="EcoliWiki"/>
</dbReference>
<dbReference type="GO" id="GO:0034214">
    <property type="term" value="P:protein hexamerization"/>
    <property type="evidence" value="ECO:0000314"/>
    <property type="project" value="EcoCyc"/>
</dbReference>
<dbReference type="FunFam" id="3.20.20.60:FF:000004">
    <property type="entry name" value="5-keto-4-deoxy-D-glucarate aldolase"/>
    <property type="match status" value="1"/>
</dbReference>
<dbReference type="Gene3D" id="3.20.20.60">
    <property type="entry name" value="Phosphoenolpyruvate-binding domains"/>
    <property type="match status" value="1"/>
</dbReference>
<dbReference type="HAMAP" id="MF_01290">
    <property type="entry name" value="KDR_aldolase"/>
    <property type="match status" value="1"/>
</dbReference>
<dbReference type="InterPro" id="IPR005000">
    <property type="entry name" value="Aldolase/citrate-lyase_domain"/>
</dbReference>
<dbReference type="InterPro" id="IPR050251">
    <property type="entry name" value="HpcH-HpaI_aldolase"/>
</dbReference>
<dbReference type="InterPro" id="IPR023593">
    <property type="entry name" value="KDR_aldolase"/>
</dbReference>
<dbReference type="InterPro" id="IPR015813">
    <property type="entry name" value="Pyrv/PenolPyrv_kinase-like_dom"/>
</dbReference>
<dbReference type="InterPro" id="IPR040442">
    <property type="entry name" value="Pyrv_kinase-like_dom_sf"/>
</dbReference>
<dbReference type="NCBIfam" id="NF007521">
    <property type="entry name" value="PRK10128.1"/>
    <property type="match status" value="1"/>
</dbReference>
<dbReference type="PANTHER" id="PTHR30502">
    <property type="entry name" value="2-KETO-3-DEOXY-L-RHAMNONATE ALDOLASE"/>
    <property type="match status" value="1"/>
</dbReference>
<dbReference type="PANTHER" id="PTHR30502:SF5">
    <property type="entry name" value="2-KETO-3-DEOXY-L-RHAMNONATE ALDOLASE"/>
    <property type="match status" value="1"/>
</dbReference>
<dbReference type="Pfam" id="PF03328">
    <property type="entry name" value="HpcH_HpaI"/>
    <property type="match status" value="1"/>
</dbReference>
<dbReference type="SUPFAM" id="SSF51621">
    <property type="entry name" value="Phosphoenolpyruvate/pyruvate domain"/>
    <property type="match status" value="1"/>
</dbReference>
<comment type="function">
    <text evidence="1 2 3">Catalyzes the reversible retro-aldol cleavage of 2-keto-3-deoxy-L-rhamnonate (KDR) to pyruvate and lactaldehyde. 2-keto-3-deoxy-L-mannonate, 2-keto-3-deoxy-L-lyxonate and 4-hydroxy-2-ketoheptane-1,7-dioate (HKHD) are also reasonably good substrates, although 2-keto-3-deoxy-L-rhamnonate is likely to be the physiological substrate (PubMed:18754683, PubMed:18754693). In vitro, can catalyze the aldolisation reaction between hydroxypyruvate (HPA) or pyruvate (PA) and D-glyceraldehyde (D-GA) (Ref.6). The condensation of hydroxypyruvate and D-glyceraldehyde produces (3R,4S,5R)-3,4,5,6-tetrahydroxy-2-oxohexanoate as the major product, 2-dehydro-D-gluconate and 2-dehydro-D-galactonate (Ref.6). The condensation of pyruvate and D-glyceraldehyde produces 2-dehydro-3-deoxy-L-galactonate as the major product and 2-dehydro-3-deoxy-D-gluconate (Ref.6).</text>
</comment>
<comment type="catalytic activity">
    <reaction evidence="1">
        <text>2-dehydro-3-deoxy-L-rhamnonate = (S)-lactaldehyde + pyruvate</text>
        <dbReference type="Rhea" id="RHEA:25784"/>
        <dbReference type="ChEBI" id="CHEBI:15361"/>
        <dbReference type="ChEBI" id="CHEBI:18041"/>
        <dbReference type="ChEBI" id="CHEBI:58371"/>
        <dbReference type="EC" id="4.1.2.53"/>
    </reaction>
</comment>
<comment type="catalytic activity">
    <reaction evidence="3">
        <text>D-glyceraldehyde + 3-hydroxypyruvate = (3R,4S,5R)-3,4,5,6-tetrahydroxy-2-oxohexanoate</text>
        <dbReference type="Rhea" id="RHEA:80047"/>
        <dbReference type="ChEBI" id="CHEBI:17180"/>
        <dbReference type="ChEBI" id="CHEBI:17378"/>
        <dbReference type="ChEBI" id="CHEBI:231434"/>
    </reaction>
</comment>
<comment type="catalytic activity">
    <reaction evidence="3">
        <text>D-glyceraldehyde + 3-hydroxypyruvate = 2-dehydro-D-gluconate</text>
        <dbReference type="Rhea" id="RHEA:80043"/>
        <dbReference type="ChEBI" id="CHEBI:16808"/>
        <dbReference type="ChEBI" id="CHEBI:17180"/>
        <dbReference type="ChEBI" id="CHEBI:17378"/>
    </reaction>
</comment>
<comment type="catalytic activity">
    <reaction evidence="3">
        <text>D-glyceraldehyde + 3-hydroxypyruvate = 2-dehydro-D-galactonate</text>
        <dbReference type="Rhea" id="RHEA:80051"/>
        <dbReference type="ChEBI" id="CHEBI:17180"/>
        <dbReference type="ChEBI" id="CHEBI:17378"/>
        <dbReference type="ChEBI" id="CHEBI:28023"/>
    </reaction>
</comment>
<comment type="catalytic activity">
    <reaction evidence="3">
        <text>D-glyceraldehyde + pyruvate = 2-dehydro-3-deoxy-L-galactonate</text>
        <dbReference type="Rhea" id="RHEA:80055"/>
        <dbReference type="ChEBI" id="CHEBI:15361"/>
        <dbReference type="ChEBI" id="CHEBI:17378"/>
        <dbReference type="ChEBI" id="CHEBI:75545"/>
    </reaction>
</comment>
<comment type="catalytic activity">
    <reaction evidence="3">
        <text>2-dehydro-3-deoxy-D-gluconate = D-glyceraldehyde + pyruvate</text>
        <dbReference type="Rhea" id="RHEA:35583"/>
        <dbReference type="ChEBI" id="CHEBI:15361"/>
        <dbReference type="ChEBI" id="CHEBI:17378"/>
        <dbReference type="ChEBI" id="CHEBI:57990"/>
    </reaction>
</comment>
<comment type="cofactor">
    <cofactor evidence="1">
        <name>Mg(2+)</name>
        <dbReference type="ChEBI" id="CHEBI:18420"/>
    </cofactor>
    <cofactor evidence="1">
        <name>Ni(2+)</name>
        <dbReference type="ChEBI" id="CHEBI:49786"/>
    </cofactor>
    <text evidence="1">Binds 1 Mg(2+) ion per subunit. Is more efficient when using Ni(2+) ion, although it is not likely to be the physiologically relevant active site metal.</text>
</comment>
<comment type="biophysicochemical properties">
    <kinetics>
        <KM evidence="1">0.078 mM for 2-keto-3-deoxy-L-rhamnonate (in the presence of magnesium)</KM>
        <KM evidence="1">0.14 mM for 2-keto-3-deoxy-L-mannonate (in the presence of magnesium)</KM>
        <KM evidence="1">0.8 mM for 2-keto-3-deoxy-L-lyxonate (in the presence of magnesium)</KM>
        <KM evidence="1">0.15 mM for 4-hydroxy-2-ketoheptane-1,7-dioate (in the presence of magnesium)</KM>
        <KM evidence="1">0.1 mM for 4-hydroxy-2-ketoheptane-1,7-dioate (in the presence of nickel)</KM>
        <KM evidence="1">0.1 mM for 4-hydroxy-2-ketopentanoate (in the presence of nickel)</KM>
        <KM evidence="1">0.05 mM for 4-hydroxy-2-ketohexanoate (in the presence of nickel)</KM>
        <text>The catalytic efficiency observed with HKHD as substrate is 750-fold higher with Ni(2+) as cofactor than that with Mg(2+) as cofactor. 4-hydroxy-2-keto-5-phenyl-pentanoate and 4-hydroxy-2-keto-6-phenylhexanoate are not substrates, suggesting a requirement for an aliphatic or less bulky distal end of the substrate.</text>
    </kinetics>
</comment>
<comment type="subunit">
    <text evidence="1">Homohexamer.</text>
</comment>
<comment type="similarity">
    <text evidence="4">Belongs to the HpcH/HpaI aldolase family. KDR aldolase subfamily.</text>
</comment>
<organism>
    <name type="scientific">Escherichia coli (strain K12)</name>
    <dbReference type="NCBI Taxonomy" id="83333"/>
    <lineage>
        <taxon>Bacteria</taxon>
        <taxon>Pseudomonadati</taxon>
        <taxon>Pseudomonadota</taxon>
        <taxon>Gammaproteobacteria</taxon>
        <taxon>Enterobacterales</taxon>
        <taxon>Enterobacteriaceae</taxon>
        <taxon>Escherichia</taxon>
    </lineage>
</organism>
<accession>P76469</accession>
<accession>P76925</accession>
<accession>P76926</accession>
<accession>P76928</accession>
<accession>P76929</accession>
<feature type="chain" id="PRO_0000207094" description="2-keto-3-deoxy-L-rhamnonate aldolase">
    <location>
        <begin position="1"/>
        <end position="267"/>
    </location>
</feature>
<feature type="active site" description="Proton acceptor">
    <location>
        <position position="49"/>
    </location>
</feature>
<feature type="binding site">
    <location>
        <position position="151"/>
    </location>
    <ligand>
        <name>substrate</name>
    </ligand>
</feature>
<feature type="binding site" evidence="1">
    <location>
        <position position="153"/>
    </location>
    <ligand>
        <name>Mg(2+)</name>
        <dbReference type="ChEBI" id="CHEBI:18420"/>
    </ligand>
</feature>
<feature type="binding site">
    <location>
        <position position="178"/>
    </location>
    <ligand>
        <name>substrate</name>
    </ligand>
</feature>
<feature type="binding site" evidence="1">
    <location>
        <position position="179"/>
    </location>
    <ligand>
        <name>Mg(2+)</name>
        <dbReference type="ChEBI" id="CHEBI:18420"/>
    </ligand>
</feature>
<feature type="binding site">
    <location>
        <position position="179"/>
    </location>
    <ligand>
        <name>substrate</name>
    </ligand>
</feature>
<feature type="site" description="Transition state stabilizer">
    <location>
        <position position="74"/>
    </location>
</feature>
<feature type="site" description="Increases basicity of active site His">
    <location>
        <position position="88"/>
    </location>
</feature>
<feature type="mutagenesis site" description="Loss of 2-keto-3-deoxy-L-rhamnonate aldolase activity." evidence="1">
    <original>H</original>
    <variation>A</variation>
    <location>
        <position position="49"/>
    </location>
</feature>
<feature type="mutagenesis site" description="Loss of 2-keto-3-deoxy-L-rhamnonate aldolase activity." evidence="1">
    <original>R</original>
    <variation>A</variation>
    <location>
        <position position="74"/>
    </location>
</feature>
<feature type="helix" evidence="5">
    <location>
        <begin position="8"/>
        <end position="14"/>
    </location>
</feature>
<feature type="strand" evidence="5">
    <location>
        <begin position="19"/>
        <end position="24"/>
    </location>
</feature>
<feature type="helix" evidence="5">
    <location>
        <begin position="29"/>
        <end position="36"/>
    </location>
</feature>
<feature type="strand" evidence="5">
    <location>
        <begin position="41"/>
        <end position="46"/>
    </location>
</feature>
<feature type="turn" evidence="5">
    <location>
        <begin position="47"/>
        <end position="49"/>
    </location>
</feature>
<feature type="helix" evidence="5">
    <location>
        <begin position="54"/>
        <end position="64"/>
    </location>
</feature>
<feature type="strand" evidence="5">
    <location>
        <begin position="67"/>
        <end position="74"/>
    </location>
</feature>
<feature type="helix" evidence="5">
    <location>
        <begin position="80"/>
        <end position="88"/>
    </location>
</feature>
<feature type="strand" evidence="5">
    <location>
        <begin position="93"/>
        <end position="96"/>
    </location>
</feature>
<feature type="helix" evidence="5">
    <location>
        <begin position="102"/>
        <end position="111"/>
    </location>
</feature>
<feature type="turn" evidence="5">
    <location>
        <begin position="115"/>
        <end position="117"/>
    </location>
</feature>
<feature type="helix" evidence="5">
    <location>
        <begin position="124"/>
        <end position="126"/>
    </location>
</feature>
<feature type="helix" evidence="5">
    <location>
        <begin position="128"/>
        <end position="133"/>
    </location>
</feature>
<feature type="helix" evidence="5">
    <location>
        <begin position="138"/>
        <end position="145"/>
    </location>
</feature>
<feature type="strand" evidence="5">
    <location>
        <begin position="147"/>
        <end position="151"/>
    </location>
</feature>
<feature type="helix" evidence="5">
    <location>
        <begin position="155"/>
        <end position="159"/>
    </location>
</feature>
<feature type="helix" evidence="5">
    <location>
        <begin position="161"/>
        <end position="165"/>
    </location>
</feature>
<feature type="strand" evidence="5">
    <location>
        <begin position="172"/>
        <end position="175"/>
    </location>
</feature>
<feature type="helix" evidence="5">
    <location>
        <begin position="177"/>
        <end position="183"/>
    </location>
</feature>
<feature type="strand" evidence="5">
    <location>
        <begin position="187"/>
        <end position="189"/>
    </location>
</feature>
<feature type="helix" evidence="5">
    <location>
        <begin position="193"/>
        <end position="208"/>
    </location>
</feature>
<feature type="strand" evidence="5">
    <location>
        <begin position="212"/>
        <end position="216"/>
    </location>
</feature>
<feature type="helix" evidence="5">
    <location>
        <begin position="220"/>
        <end position="228"/>
    </location>
</feature>
<feature type="strand" evidence="5">
    <location>
        <begin position="233"/>
        <end position="238"/>
    </location>
</feature>
<feature type="helix" evidence="5">
    <location>
        <begin position="239"/>
        <end position="252"/>
    </location>
</feature>
<name>RHMA_ECOLI</name>
<reference key="1">
    <citation type="journal article" date="1997" name="DNA Res.">
        <title>Construction of a contiguous 874-kb sequence of the Escherichia coli-K12 genome corresponding to 50.0-68.8 min on the linkage map and analysis of its sequence features.</title>
        <authorList>
            <person name="Yamamoto Y."/>
            <person name="Aiba H."/>
            <person name="Baba T."/>
            <person name="Hayashi K."/>
            <person name="Inada T."/>
            <person name="Isono K."/>
            <person name="Itoh T."/>
            <person name="Kimura S."/>
            <person name="Kitagawa M."/>
            <person name="Makino K."/>
            <person name="Miki T."/>
            <person name="Mitsuhashi N."/>
            <person name="Mizobuchi K."/>
            <person name="Mori H."/>
            <person name="Nakade S."/>
            <person name="Nakamura Y."/>
            <person name="Nashimoto H."/>
            <person name="Oshima T."/>
            <person name="Oyama S."/>
            <person name="Saito N."/>
            <person name="Sampei G."/>
            <person name="Satoh Y."/>
            <person name="Sivasundaram S."/>
            <person name="Tagami H."/>
            <person name="Takahashi H."/>
            <person name="Takeda J."/>
            <person name="Takemoto K."/>
            <person name="Uehara K."/>
            <person name="Wada C."/>
            <person name="Yamagata S."/>
            <person name="Horiuchi T."/>
        </authorList>
    </citation>
    <scope>NUCLEOTIDE SEQUENCE [LARGE SCALE GENOMIC DNA]</scope>
    <source>
        <strain>K12 / W3110 / ATCC 27325 / DSM 5911</strain>
    </source>
</reference>
<reference key="2">
    <citation type="journal article" date="1997" name="Science">
        <title>The complete genome sequence of Escherichia coli K-12.</title>
        <authorList>
            <person name="Blattner F.R."/>
            <person name="Plunkett G. III"/>
            <person name="Bloch C.A."/>
            <person name="Perna N.T."/>
            <person name="Burland V."/>
            <person name="Riley M."/>
            <person name="Collado-Vides J."/>
            <person name="Glasner J.D."/>
            <person name="Rode C.K."/>
            <person name="Mayhew G.F."/>
            <person name="Gregor J."/>
            <person name="Davis N.W."/>
            <person name="Kirkpatrick H.A."/>
            <person name="Goeden M.A."/>
            <person name="Rose D.J."/>
            <person name="Mau B."/>
            <person name="Shao Y."/>
        </authorList>
    </citation>
    <scope>NUCLEOTIDE SEQUENCE [LARGE SCALE GENOMIC DNA]</scope>
    <source>
        <strain>K12 / MG1655 / ATCC 47076</strain>
    </source>
</reference>
<reference key="3">
    <citation type="journal article" date="2006" name="Mol. Syst. Biol.">
        <title>Highly accurate genome sequences of Escherichia coli K-12 strains MG1655 and W3110.</title>
        <authorList>
            <person name="Hayashi K."/>
            <person name="Morooka N."/>
            <person name="Yamamoto Y."/>
            <person name="Fujita K."/>
            <person name="Isono K."/>
            <person name="Choi S."/>
            <person name="Ohtsubo E."/>
            <person name="Baba T."/>
            <person name="Wanner B.L."/>
            <person name="Mori H."/>
            <person name="Horiuchi T."/>
        </authorList>
    </citation>
    <scope>NUCLEOTIDE SEQUENCE [LARGE SCALE GENOMIC DNA]</scope>
    <source>
        <strain>K12 / W3110 / ATCC 27325 / DSM 5911</strain>
    </source>
</reference>
<reference key="4">
    <citation type="journal article" date="2002" name="Acta Crystallogr. D">
        <title>Expression, purification, crystallization and preliminary characterization of an HHED aldolase homologue from Escherichia coli K12.</title>
        <authorList>
            <person name="Wright A."/>
            <person name="Blewett A."/>
            <person name="Fueloep V."/>
            <person name="Cooper R."/>
            <person name="Burrows S."/>
            <person name="Jones C."/>
            <person name="Roper D."/>
        </authorList>
    </citation>
    <scope>CRYSTALLIZATION</scope>
    <source>
        <strain>K12 / MG1655 / ATCC 47076</strain>
    </source>
</reference>
<reference key="5">
    <citation type="journal article" date="2008" name="Biochemistry">
        <title>Evolution of enzymatic activities in the enolase superfamily: L-rhamnonate dehydratase.</title>
        <authorList>
            <person name="Rakus J.F."/>
            <person name="Fedorov A.A."/>
            <person name="Fedorov E.V."/>
            <person name="Glasner M.E."/>
            <person name="Hubbard B.K."/>
            <person name="Delli J.D."/>
            <person name="Babbitt P.C."/>
            <person name="Almo S.C."/>
            <person name="Gerlt J.A."/>
        </authorList>
    </citation>
    <scope>FUNCTION</scope>
    <source>
        <strain>K12 / MG1655 / ATCC 47076</strain>
    </source>
</reference>
<reference key="6">
    <citation type="journal article" date="2017" name="Green Chem.">
        <title>Expanding the reaction space of aldolases using hydroxypyruvate as a nucleophilic substrate.</title>
        <authorList>
            <person name="de Berardinis V."/>
            <person name="Guerard-Helaine C."/>
            <person name="Darii E."/>
            <person name="Bastard K."/>
            <person name="Helaine V."/>
            <person name="Mariage A."/>
            <person name="Petit J.-L."/>
            <person name="Poupard N."/>
            <person name="Sanchez-Moreno I."/>
            <person name="Stam M."/>
            <person name="Gefflaut T."/>
            <person name="Salanoubat M."/>
            <person name="Lemaire M."/>
        </authorList>
    </citation>
    <scope>FUNCTION</scope>
    <scope>CATALYTIC ACTIVITY</scope>
</reference>
<reference key="7">
    <citation type="journal article" date="2008" name="Biochemistry">
        <title>Crystal structure and functional assignment of YfaU, a metal ion dependent class II aldolase from Escherichia coli K12.</title>
        <authorList>
            <person name="Rea D."/>
            <person name="Hovington R."/>
            <person name="Rakus J.F."/>
            <person name="Gerlt J.A."/>
            <person name="Fueloep V."/>
            <person name="Bugg T.D.H."/>
            <person name="Roper D.I."/>
        </authorList>
    </citation>
    <scope>X-RAY CRYSTALLOGRAPHY (1.39 ANGSTROMS) OF APOENZYME AND IN COMPLEX WITH MAGNESIUM AND PYRUVATE</scope>
    <scope>FUNCTION</scope>
    <scope>CATALYTIC ACTIVITY</scope>
    <scope>SUBSTRATE SPECIFICITY</scope>
    <scope>CATALYTIC MECHANISM</scope>
    <scope>COFACTOR</scope>
    <scope>BIOPHYSICOCHEMICAL PROPERTIES</scope>
    <scope>SUBUNIT</scope>
    <scope>MUTAGENESIS OF HIS-49 AND ARG-74</scope>
    <source>
        <strain>K12 / MG1655 / ATCC 47076</strain>
    </source>
</reference>
<sequence>MNALLSNPFKERLRKGEVQIGLWLSSTTAYMAEIAATSGYDWLLIDGEHAPNTIQDLYHQLQAVAPYASQPVIRPVEGSKPLIKQVLDIGAQTLLIPMVDTAEQARQVVSATRYPPYGERGVGASVARAARWGRIENYMAQVNDSLCLLVQVESKTALDNLDEILDVEGIDGVFIGPADLSASLGYPDNAGHPEVQRIIETSIRRIRAAGKAAGFLAVAPDMAQQCLAWGANFVAVGVDTMLYSDALDQRLAMFKSGKNGPRIKGSY</sequence>
<proteinExistence type="evidence at protein level"/>
<keyword id="KW-0002">3D-structure</keyword>
<keyword id="KW-0456">Lyase</keyword>
<keyword id="KW-0460">Magnesium</keyword>
<keyword id="KW-0479">Metal-binding</keyword>
<keyword id="KW-0533">Nickel</keyword>
<keyword id="KW-1185">Reference proteome</keyword>
<gene>
    <name type="primary">rhmA</name>
    <name type="synonym">yfaU</name>
    <name type="ordered locus">b2245</name>
    <name type="ordered locus">JW2239</name>
</gene>
<protein>
    <recommendedName>
        <fullName>2-keto-3-deoxy-L-rhamnonate aldolase</fullName>
        <shortName>KDR aldolase</shortName>
        <ecNumber evidence="1">4.1.2.53</ecNumber>
    </recommendedName>
    <alternativeName>
        <fullName>2-dehydro-3-deoxyrhamnonate aldolase</fullName>
    </alternativeName>
    <alternativeName>
        <fullName>2-keto-3-deoxy acid sugar aldolase</fullName>
    </alternativeName>
</protein>
<evidence type="ECO:0000269" key="1">
    <source>
    </source>
</evidence>
<evidence type="ECO:0000269" key="2">
    <source>
    </source>
</evidence>
<evidence type="ECO:0000269" key="3">
    <source ref="6"/>
</evidence>
<evidence type="ECO:0000305" key="4"/>
<evidence type="ECO:0007829" key="5">
    <source>
        <dbReference type="PDB" id="2VWS"/>
    </source>
</evidence>